<organism>
    <name type="scientific">Methylocella silvestris (strain DSM 15510 / CIP 108128 / LMG 27833 / NCIMB 13906 / BL2)</name>
    <dbReference type="NCBI Taxonomy" id="395965"/>
    <lineage>
        <taxon>Bacteria</taxon>
        <taxon>Pseudomonadati</taxon>
        <taxon>Pseudomonadota</taxon>
        <taxon>Alphaproteobacteria</taxon>
        <taxon>Hyphomicrobiales</taxon>
        <taxon>Beijerinckiaceae</taxon>
        <taxon>Methylocella</taxon>
    </lineage>
</organism>
<keyword id="KW-1185">Reference proteome</keyword>
<keyword id="KW-0687">Ribonucleoprotein</keyword>
<keyword id="KW-0689">Ribosomal protein</keyword>
<keyword id="KW-0694">RNA-binding</keyword>
<keyword id="KW-0699">rRNA-binding</keyword>
<name>RL6_METSB</name>
<dbReference type="EMBL" id="CP001280">
    <property type="protein sequence ID" value="ACK49537.1"/>
    <property type="molecule type" value="Genomic_DNA"/>
</dbReference>
<dbReference type="RefSeq" id="WP_012589607.1">
    <property type="nucleotide sequence ID" value="NC_011666.1"/>
</dbReference>
<dbReference type="SMR" id="B8ELE8"/>
<dbReference type="STRING" id="395965.Msil_0565"/>
<dbReference type="KEGG" id="msl:Msil_0565"/>
<dbReference type="eggNOG" id="COG0097">
    <property type="taxonomic scope" value="Bacteria"/>
</dbReference>
<dbReference type="HOGENOM" id="CLU_065464_1_2_5"/>
<dbReference type="OrthoDB" id="9805007at2"/>
<dbReference type="Proteomes" id="UP000002257">
    <property type="component" value="Chromosome"/>
</dbReference>
<dbReference type="GO" id="GO:0022625">
    <property type="term" value="C:cytosolic large ribosomal subunit"/>
    <property type="evidence" value="ECO:0007669"/>
    <property type="project" value="TreeGrafter"/>
</dbReference>
<dbReference type="GO" id="GO:0019843">
    <property type="term" value="F:rRNA binding"/>
    <property type="evidence" value="ECO:0007669"/>
    <property type="project" value="UniProtKB-UniRule"/>
</dbReference>
<dbReference type="GO" id="GO:0003735">
    <property type="term" value="F:structural constituent of ribosome"/>
    <property type="evidence" value="ECO:0007669"/>
    <property type="project" value="InterPro"/>
</dbReference>
<dbReference type="GO" id="GO:0002181">
    <property type="term" value="P:cytoplasmic translation"/>
    <property type="evidence" value="ECO:0007669"/>
    <property type="project" value="TreeGrafter"/>
</dbReference>
<dbReference type="FunFam" id="3.90.930.12:FF:000001">
    <property type="entry name" value="50S ribosomal protein L6"/>
    <property type="match status" value="1"/>
</dbReference>
<dbReference type="FunFam" id="3.90.930.12:FF:000002">
    <property type="entry name" value="50S ribosomal protein L6"/>
    <property type="match status" value="1"/>
</dbReference>
<dbReference type="Gene3D" id="3.90.930.12">
    <property type="entry name" value="Ribosomal protein L6, alpha-beta domain"/>
    <property type="match status" value="2"/>
</dbReference>
<dbReference type="HAMAP" id="MF_01365_B">
    <property type="entry name" value="Ribosomal_uL6_B"/>
    <property type="match status" value="1"/>
</dbReference>
<dbReference type="InterPro" id="IPR000702">
    <property type="entry name" value="Ribosomal_uL6-like"/>
</dbReference>
<dbReference type="InterPro" id="IPR036789">
    <property type="entry name" value="Ribosomal_uL6-like_a/b-dom_sf"/>
</dbReference>
<dbReference type="InterPro" id="IPR020040">
    <property type="entry name" value="Ribosomal_uL6_a/b-dom"/>
</dbReference>
<dbReference type="InterPro" id="IPR019906">
    <property type="entry name" value="Ribosomal_uL6_bac-type"/>
</dbReference>
<dbReference type="InterPro" id="IPR002358">
    <property type="entry name" value="Ribosomal_uL6_CS"/>
</dbReference>
<dbReference type="NCBIfam" id="TIGR03654">
    <property type="entry name" value="L6_bact"/>
    <property type="match status" value="1"/>
</dbReference>
<dbReference type="PANTHER" id="PTHR11655">
    <property type="entry name" value="60S/50S RIBOSOMAL PROTEIN L6/L9"/>
    <property type="match status" value="1"/>
</dbReference>
<dbReference type="PANTHER" id="PTHR11655:SF14">
    <property type="entry name" value="LARGE RIBOSOMAL SUBUNIT PROTEIN UL6M"/>
    <property type="match status" value="1"/>
</dbReference>
<dbReference type="Pfam" id="PF00347">
    <property type="entry name" value="Ribosomal_L6"/>
    <property type="match status" value="2"/>
</dbReference>
<dbReference type="PIRSF" id="PIRSF002162">
    <property type="entry name" value="Ribosomal_L6"/>
    <property type="match status" value="1"/>
</dbReference>
<dbReference type="PRINTS" id="PR00059">
    <property type="entry name" value="RIBOSOMALL6"/>
</dbReference>
<dbReference type="SUPFAM" id="SSF56053">
    <property type="entry name" value="Ribosomal protein L6"/>
    <property type="match status" value="2"/>
</dbReference>
<dbReference type="PROSITE" id="PS00525">
    <property type="entry name" value="RIBOSOMAL_L6_1"/>
    <property type="match status" value="1"/>
</dbReference>
<evidence type="ECO:0000255" key="1">
    <source>
        <dbReference type="HAMAP-Rule" id="MF_01365"/>
    </source>
</evidence>
<evidence type="ECO:0000305" key="2"/>
<accession>B8ELE8</accession>
<protein>
    <recommendedName>
        <fullName evidence="1">Large ribosomal subunit protein uL6</fullName>
    </recommendedName>
    <alternativeName>
        <fullName evidence="2">50S ribosomal protein L6</fullName>
    </alternativeName>
</protein>
<proteinExistence type="inferred from homology"/>
<reference key="1">
    <citation type="journal article" date="2010" name="J. Bacteriol.">
        <title>Complete genome sequence of the aerobic facultative methanotroph Methylocella silvestris BL2.</title>
        <authorList>
            <person name="Chen Y."/>
            <person name="Crombie A."/>
            <person name="Rahman M.T."/>
            <person name="Dedysh S.N."/>
            <person name="Liesack W."/>
            <person name="Stott M.B."/>
            <person name="Alam M."/>
            <person name="Theisen A.R."/>
            <person name="Murrell J.C."/>
            <person name="Dunfield P.F."/>
        </authorList>
    </citation>
    <scope>NUCLEOTIDE SEQUENCE [LARGE SCALE GENOMIC DNA]</scope>
    <source>
        <strain>DSM 15510 / CIP 108128 / LMG 27833 / NCIMB 13906 / BL2</strain>
    </source>
</reference>
<feature type="chain" id="PRO_1000166819" description="Large ribosomal subunit protein uL6">
    <location>
        <begin position="1"/>
        <end position="177"/>
    </location>
</feature>
<sequence>MSRIGKKPVAIPSGVTANVDGQLISVKGGKGQLSFAAPEDVTVVLGDGGIEVSPRNETKRARAMWGMTRSMVNNLVVGVSKGFERKLEITGVGYKAAVSGKNLQLSLGFSHDVTFPIPDGISIVAAKPTEVAISGIDKRQVGQIASEIRALRPPEPYKGKGVKYAGEFIFRKEGKKK</sequence>
<comment type="function">
    <text evidence="1">This protein binds to the 23S rRNA, and is important in its secondary structure. It is located near the subunit interface in the base of the L7/L12 stalk, and near the tRNA binding site of the peptidyltransferase center.</text>
</comment>
<comment type="subunit">
    <text evidence="1">Part of the 50S ribosomal subunit.</text>
</comment>
<comment type="similarity">
    <text evidence="1">Belongs to the universal ribosomal protein uL6 family.</text>
</comment>
<gene>
    <name evidence="1" type="primary">rplF</name>
    <name type="ordered locus">Msil_0565</name>
</gene>